<dbReference type="EMBL" id="AC097280">
    <property type="protein sequence ID" value="AAO34491.1"/>
    <property type="molecule type" value="Genomic_DNA"/>
</dbReference>
<dbReference type="EMBL" id="DP000009">
    <property type="protein sequence ID" value="ABF97673.1"/>
    <property type="molecule type" value="Genomic_DNA"/>
</dbReference>
<dbReference type="EMBL" id="AP008209">
    <property type="protein sequence ID" value="BAF12593.2"/>
    <property type="status" value="ALT_SEQ"/>
    <property type="molecule type" value="Genomic_DNA"/>
</dbReference>
<dbReference type="EMBL" id="AP014959">
    <property type="status" value="NOT_ANNOTATED_CDS"/>
    <property type="molecule type" value="Genomic_DNA"/>
</dbReference>
<dbReference type="SMR" id="Q851V5"/>
<dbReference type="STRING" id="39947.Q851V5"/>
<dbReference type="PaxDb" id="39947-Q851V5"/>
<dbReference type="KEGG" id="dosa:Os03g0621600"/>
<dbReference type="eggNOG" id="ENOG502QT0X">
    <property type="taxonomic scope" value="Eukaryota"/>
</dbReference>
<dbReference type="InParanoid" id="Q851V5"/>
<dbReference type="Proteomes" id="UP000000763">
    <property type="component" value="Chromosome 3"/>
</dbReference>
<dbReference type="Proteomes" id="UP000059680">
    <property type="component" value="Chromosome 3"/>
</dbReference>
<dbReference type="GO" id="GO:0005634">
    <property type="term" value="C:nucleus"/>
    <property type="evidence" value="ECO:0007669"/>
    <property type="project" value="UniProtKB-SubCell"/>
</dbReference>
<dbReference type="GO" id="GO:0003677">
    <property type="term" value="F:DNA binding"/>
    <property type="evidence" value="ECO:0007669"/>
    <property type="project" value="UniProtKB-KW"/>
</dbReference>
<dbReference type="CDD" id="cd10017">
    <property type="entry name" value="B3_DNA"/>
    <property type="match status" value="5"/>
</dbReference>
<dbReference type="Gene3D" id="2.40.330.10">
    <property type="entry name" value="DNA-binding pseudobarrel domain"/>
    <property type="match status" value="6"/>
</dbReference>
<dbReference type="InterPro" id="IPR003340">
    <property type="entry name" value="B3_DNA-bd"/>
</dbReference>
<dbReference type="InterPro" id="IPR015300">
    <property type="entry name" value="DNA-bd_pseudobarrel_sf"/>
</dbReference>
<dbReference type="InterPro" id="IPR044837">
    <property type="entry name" value="REM16-like"/>
</dbReference>
<dbReference type="PANTHER" id="PTHR31391:SF121">
    <property type="entry name" value="B3 DOMAIN-CONTAINING PROTEIN OS08G0325100-RELATED"/>
    <property type="match status" value="1"/>
</dbReference>
<dbReference type="PANTHER" id="PTHR31391">
    <property type="entry name" value="B3 DOMAIN-CONTAINING PROTEIN OS11G0197600-RELATED"/>
    <property type="match status" value="1"/>
</dbReference>
<dbReference type="Pfam" id="PF02362">
    <property type="entry name" value="B3"/>
    <property type="match status" value="5"/>
</dbReference>
<dbReference type="SMART" id="SM01019">
    <property type="entry name" value="B3"/>
    <property type="match status" value="5"/>
</dbReference>
<dbReference type="SUPFAM" id="SSF101936">
    <property type="entry name" value="DNA-binding pseudobarrel domain"/>
    <property type="match status" value="5"/>
</dbReference>
<dbReference type="PROSITE" id="PS50863">
    <property type="entry name" value="B3"/>
    <property type="match status" value="5"/>
</dbReference>
<comment type="subcellular location">
    <subcellularLocation>
        <location evidence="1">Nucleus</location>
    </subcellularLocation>
</comment>
<comment type="sequence caution" evidence="3">
    <conflict type="erroneous gene model prediction">
        <sequence resource="EMBL-CDS" id="BAF12593"/>
    </conflict>
</comment>
<name>Y3216_ORYSJ</name>
<reference key="1">
    <citation type="journal article" date="2005" name="Genome Res.">
        <title>Sequence, annotation, and analysis of synteny between rice chromosome 3 and diverged grass species.</title>
        <authorList>
            <consortium name="The rice chromosome 3 sequencing consortium"/>
            <person name="Buell C.R."/>
            <person name="Yuan Q."/>
            <person name="Ouyang S."/>
            <person name="Liu J."/>
            <person name="Zhu W."/>
            <person name="Wang A."/>
            <person name="Maiti R."/>
            <person name="Haas B."/>
            <person name="Wortman J."/>
            <person name="Pertea M."/>
            <person name="Jones K.M."/>
            <person name="Kim M."/>
            <person name="Overton L."/>
            <person name="Tsitrin T."/>
            <person name="Fadrosh D."/>
            <person name="Bera J."/>
            <person name="Weaver B."/>
            <person name="Jin S."/>
            <person name="Johri S."/>
            <person name="Reardon M."/>
            <person name="Webb K."/>
            <person name="Hill J."/>
            <person name="Moffat K."/>
            <person name="Tallon L."/>
            <person name="Van Aken S."/>
            <person name="Lewis M."/>
            <person name="Utterback T."/>
            <person name="Feldblyum T."/>
            <person name="Zismann V."/>
            <person name="Iobst S."/>
            <person name="Hsiao J."/>
            <person name="de Vazeille A.R."/>
            <person name="Salzberg S.L."/>
            <person name="White O."/>
            <person name="Fraser C.M."/>
            <person name="Yu Y."/>
            <person name="Kim H."/>
            <person name="Rambo T."/>
            <person name="Currie J."/>
            <person name="Collura K."/>
            <person name="Kernodle-Thompson S."/>
            <person name="Wei F."/>
            <person name="Kudrna K."/>
            <person name="Ammiraju J.S.S."/>
            <person name="Luo M."/>
            <person name="Goicoechea J.L."/>
            <person name="Wing R.A."/>
            <person name="Henry D."/>
            <person name="Oates R."/>
            <person name="Palmer M."/>
            <person name="Pries G."/>
            <person name="Saski C."/>
            <person name="Simmons J."/>
            <person name="Soderlund C."/>
            <person name="Nelson W."/>
            <person name="de la Bastide M."/>
            <person name="Spiegel L."/>
            <person name="Nascimento L."/>
            <person name="Huang E."/>
            <person name="Preston R."/>
            <person name="Zutavern T."/>
            <person name="Palmer L."/>
            <person name="O'Shaughnessy A."/>
            <person name="Dike S."/>
            <person name="McCombie W.R."/>
            <person name="Minx P."/>
            <person name="Cordum H."/>
            <person name="Wilson R."/>
            <person name="Jin W."/>
            <person name="Lee H.R."/>
            <person name="Jiang J."/>
            <person name="Jackson S."/>
        </authorList>
    </citation>
    <scope>NUCLEOTIDE SEQUENCE [LARGE SCALE GENOMIC DNA]</scope>
    <source>
        <strain>cv. Nipponbare</strain>
    </source>
</reference>
<reference key="2">
    <citation type="journal article" date="2005" name="Nature">
        <title>The map-based sequence of the rice genome.</title>
        <authorList>
            <consortium name="International rice genome sequencing project (IRGSP)"/>
        </authorList>
    </citation>
    <scope>NUCLEOTIDE SEQUENCE [LARGE SCALE GENOMIC DNA]</scope>
    <source>
        <strain>cv. Nipponbare</strain>
    </source>
</reference>
<reference key="3">
    <citation type="journal article" date="2008" name="Nucleic Acids Res.">
        <title>The rice annotation project database (RAP-DB): 2008 update.</title>
        <authorList>
            <consortium name="The rice annotation project (RAP)"/>
        </authorList>
    </citation>
    <scope>GENOME REANNOTATION</scope>
    <source>
        <strain>cv. Nipponbare</strain>
    </source>
</reference>
<reference key="4">
    <citation type="journal article" date="2013" name="Rice">
        <title>Improvement of the Oryza sativa Nipponbare reference genome using next generation sequence and optical map data.</title>
        <authorList>
            <person name="Kawahara Y."/>
            <person name="de la Bastide M."/>
            <person name="Hamilton J.P."/>
            <person name="Kanamori H."/>
            <person name="McCombie W.R."/>
            <person name="Ouyang S."/>
            <person name="Schwartz D.C."/>
            <person name="Tanaka T."/>
            <person name="Wu J."/>
            <person name="Zhou S."/>
            <person name="Childs K.L."/>
            <person name="Davidson R.M."/>
            <person name="Lin H."/>
            <person name="Quesada-Ocampo L."/>
            <person name="Vaillancourt B."/>
            <person name="Sakai H."/>
            <person name="Lee S.S."/>
            <person name="Kim J."/>
            <person name="Numa H."/>
            <person name="Itoh T."/>
            <person name="Buell C.R."/>
            <person name="Matsumoto T."/>
        </authorList>
    </citation>
    <scope>GENOME REANNOTATION</scope>
    <source>
        <strain>cv. Nipponbare</strain>
    </source>
</reference>
<keyword id="KW-0238">DNA-binding</keyword>
<keyword id="KW-0539">Nucleus</keyword>
<keyword id="KW-1185">Reference proteome</keyword>
<keyword id="KW-0677">Repeat</keyword>
<keyword id="KW-0804">Transcription</keyword>
<keyword id="KW-0805">Transcription regulation</keyword>
<organism>
    <name type="scientific">Oryza sativa subsp. japonica</name>
    <name type="common">Rice</name>
    <dbReference type="NCBI Taxonomy" id="39947"/>
    <lineage>
        <taxon>Eukaryota</taxon>
        <taxon>Viridiplantae</taxon>
        <taxon>Streptophyta</taxon>
        <taxon>Embryophyta</taxon>
        <taxon>Tracheophyta</taxon>
        <taxon>Spermatophyta</taxon>
        <taxon>Magnoliopsida</taxon>
        <taxon>Liliopsida</taxon>
        <taxon>Poales</taxon>
        <taxon>Poaceae</taxon>
        <taxon>BOP clade</taxon>
        <taxon>Oryzoideae</taxon>
        <taxon>Oryzeae</taxon>
        <taxon>Oryzinae</taxon>
        <taxon>Oryza</taxon>
        <taxon>Oryza sativa</taxon>
    </lineage>
</organism>
<gene>
    <name type="ordered locus">Os03g0621600</name>
    <name type="ordered locus">LOC_Os03g42370</name>
    <name type="ORF">OSJNBb0111B07.17</name>
</gene>
<accession>Q851V5</accession>
<protein>
    <recommendedName>
        <fullName>Putative B3 domain-containing protein Os03g0621600</fullName>
    </recommendedName>
</protein>
<feature type="chain" id="PRO_0000378050" description="Putative B3 domain-containing protein Os03g0621600">
    <location>
        <begin position="1"/>
        <end position="1029"/>
    </location>
</feature>
<feature type="DNA-binding region" description="TF-B3 1" evidence="1">
    <location>
        <begin position="147"/>
        <end position="240"/>
    </location>
</feature>
<feature type="DNA-binding region" description="TF-B3 2" evidence="1">
    <location>
        <begin position="339"/>
        <end position="430"/>
    </location>
</feature>
<feature type="DNA-binding region" description="TF-B3 3" evidence="1">
    <location>
        <begin position="450"/>
        <end position="543"/>
    </location>
</feature>
<feature type="DNA-binding region" description="TF-B3 4" evidence="1">
    <location>
        <begin position="731"/>
        <end position="824"/>
    </location>
</feature>
<feature type="DNA-binding region" description="TF-B3 5" evidence="1">
    <location>
        <begin position="934"/>
        <end position="1029"/>
    </location>
</feature>
<feature type="region of interest" description="Disordered" evidence="2">
    <location>
        <begin position="572"/>
        <end position="605"/>
    </location>
</feature>
<feature type="region of interest" description="Disordered" evidence="2">
    <location>
        <begin position="852"/>
        <end position="882"/>
    </location>
</feature>
<feature type="compositionally biased region" description="Polar residues" evidence="2">
    <location>
        <begin position="591"/>
        <end position="605"/>
    </location>
</feature>
<feature type="compositionally biased region" description="Polar residues" evidence="2">
    <location>
        <begin position="852"/>
        <end position="867"/>
    </location>
</feature>
<evidence type="ECO:0000255" key="1">
    <source>
        <dbReference type="PROSITE-ProRule" id="PRU00326"/>
    </source>
</evidence>
<evidence type="ECO:0000256" key="2">
    <source>
        <dbReference type="SAM" id="MobiDB-lite"/>
    </source>
</evidence>
<evidence type="ECO:0000305" key="3"/>
<sequence>MAPFLASPIRLHPCPLLFSHPHLFGSDYFAFSVKGRGAHLESMRVENKRGNRSWGTDAKRTHPNSIFNQLVRYGYIGTGFPDMNCSLTWSLIGGPSTLSLPSFFPSAHLLLSLALFFFLCIQSNHRMSKSGCERCRGRGFWDTDDQDTYFFKVMIGGFRRQMTIPYKFAENFRDQIQGTIKLKARNGNTCSVLVDKCSNKLVLTKGWAEFANSHDIKMGDFLVFRYTGNSQFEVKIFDPSGCVKAASHNAVNIGQHAQNMQGDPIEILSCSDEHLRAQSLTTERQNQPEKDVIDNCNKKMKTEHASSSEDDQETPTAEVHRMKVEEMVRAIHSNHPVFVAVMKKSNVTRQPCYVAISRKYANEYFPGGDQMLTLQRHGKRWQVKFCISKRKLRMLSKGWRKFTRDNELQHWAPLALFITLFFSPHFRKMKKCGQKMRKLNTRSTARDDQEKYFFKVMIGDFHKRMTIPDKFARHFKGVISKTIKLEPRSGYTFDVQVTKKLNILVLGSGWESFVNAHDLNMGDFLVFKYNGDFLLQVLIFDPSGCEKSTSCSMENAIDHVGQGWKEHNDISTSYHDQPKGNKHWMQKDSSSKGNKIGNTRSSNTPSKFSGCILPRGTCLPVVQEKKMKEKIQAIHSKTPMYGNVMTKCNVSGSPCVLEITQLYDDAYLPFNNGQELMLRHRDKSWKVRFYRFKNKSRKLTQASSLYKMRRPGARCREGHAHFNGNHIDGQYKNFFKVMIGRFRERMIIPNEFLQYFRGKIPRTIKLQLRDGCTYDVQVTKNLGKISLQSGWKAFVTAHDLQMGDFLVFSYDGISKLKVLIFGPSGCEKVHSRSTLKNATHCGEKWEEPLHISSNSHDLPVKSPQNVSKSEKQWDSSEQENDTANIEEVALQGDDLQGHPVLNCILPKHTRLTDMQKQQLESKVGAIHSEIPIYGCILRKSRVHGKSQTVDICREYADVYLPFKELNMTLQRHGKNWEVLCRTKDTRTKRLSTGWSRFAQENNLQVGDICLFELLKKKEYSMNVHIIPKK</sequence>
<proteinExistence type="inferred from homology"/>